<proteinExistence type="inferred from homology"/>
<evidence type="ECO:0000255" key="1">
    <source>
        <dbReference type="HAMAP-Rule" id="MF_00248"/>
    </source>
</evidence>
<reference key="1">
    <citation type="submission" date="2007-02" db="EMBL/GenBank/DDBJ databases">
        <title>Complete sequence of chromosome of Yersinia pestis Pestoides F.</title>
        <authorList>
            <consortium name="US DOE Joint Genome Institute"/>
            <person name="Copeland A."/>
            <person name="Lucas S."/>
            <person name="Lapidus A."/>
            <person name="Barry K."/>
            <person name="Detter J.C."/>
            <person name="Glavina del Rio T."/>
            <person name="Hammon N."/>
            <person name="Israni S."/>
            <person name="Dalin E."/>
            <person name="Tice H."/>
            <person name="Pitluck S."/>
            <person name="Di Bartolo G."/>
            <person name="Chain P."/>
            <person name="Malfatti S."/>
            <person name="Shin M."/>
            <person name="Vergez L."/>
            <person name="Schmutz J."/>
            <person name="Larimer F."/>
            <person name="Land M."/>
            <person name="Hauser L."/>
            <person name="Worsham P."/>
            <person name="Chu M."/>
            <person name="Bearden S."/>
            <person name="Garcia E."/>
            <person name="Richardson P."/>
        </authorList>
    </citation>
    <scope>NUCLEOTIDE SEQUENCE [LARGE SCALE GENOMIC DNA]</scope>
    <source>
        <strain>Pestoides F</strain>
    </source>
</reference>
<protein>
    <recommendedName>
        <fullName evidence="1">ATP-dependent protease subunit HslV</fullName>
        <ecNumber evidence="1">3.4.25.2</ecNumber>
    </recommendedName>
</protein>
<accession>A4TS83</accession>
<organism>
    <name type="scientific">Yersinia pestis (strain Pestoides F)</name>
    <dbReference type="NCBI Taxonomy" id="386656"/>
    <lineage>
        <taxon>Bacteria</taxon>
        <taxon>Pseudomonadati</taxon>
        <taxon>Pseudomonadota</taxon>
        <taxon>Gammaproteobacteria</taxon>
        <taxon>Enterobacterales</taxon>
        <taxon>Yersiniaceae</taxon>
        <taxon>Yersinia</taxon>
    </lineage>
</organism>
<feature type="chain" id="PRO_1000012692" description="ATP-dependent protease subunit HslV">
    <location>
        <begin position="1"/>
        <end position="174"/>
    </location>
</feature>
<feature type="active site" evidence="1">
    <location>
        <position position="2"/>
    </location>
</feature>
<feature type="binding site" evidence="1">
    <location>
        <position position="157"/>
    </location>
    <ligand>
        <name>Na(+)</name>
        <dbReference type="ChEBI" id="CHEBI:29101"/>
    </ligand>
</feature>
<feature type="binding site" evidence="1">
    <location>
        <position position="160"/>
    </location>
    <ligand>
        <name>Na(+)</name>
        <dbReference type="ChEBI" id="CHEBI:29101"/>
    </ligand>
</feature>
<feature type="binding site" evidence="1">
    <location>
        <position position="163"/>
    </location>
    <ligand>
        <name>Na(+)</name>
        <dbReference type="ChEBI" id="CHEBI:29101"/>
    </ligand>
</feature>
<dbReference type="EC" id="3.4.25.2" evidence="1"/>
<dbReference type="EMBL" id="CP000668">
    <property type="protein sequence ID" value="ABP42145.1"/>
    <property type="molecule type" value="Genomic_DNA"/>
</dbReference>
<dbReference type="RefSeq" id="WP_002208942.1">
    <property type="nucleotide sequence ID" value="NZ_CP009715.1"/>
</dbReference>
<dbReference type="SMR" id="A4TS83"/>
<dbReference type="MEROPS" id="T01.006"/>
<dbReference type="GeneID" id="97458253"/>
<dbReference type="KEGG" id="ypp:YPDSF_3800"/>
<dbReference type="PATRIC" id="fig|386656.14.peg.720"/>
<dbReference type="GO" id="GO:0009376">
    <property type="term" value="C:HslUV protease complex"/>
    <property type="evidence" value="ECO:0007669"/>
    <property type="project" value="UniProtKB-UniRule"/>
</dbReference>
<dbReference type="GO" id="GO:0005839">
    <property type="term" value="C:proteasome core complex"/>
    <property type="evidence" value="ECO:0007669"/>
    <property type="project" value="InterPro"/>
</dbReference>
<dbReference type="GO" id="GO:0046872">
    <property type="term" value="F:metal ion binding"/>
    <property type="evidence" value="ECO:0007669"/>
    <property type="project" value="UniProtKB-KW"/>
</dbReference>
<dbReference type="GO" id="GO:0004298">
    <property type="term" value="F:threonine-type endopeptidase activity"/>
    <property type="evidence" value="ECO:0007669"/>
    <property type="project" value="UniProtKB-KW"/>
</dbReference>
<dbReference type="GO" id="GO:0051603">
    <property type="term" value="P:proteolysis involved in protein catabolic process"/>
    <property type="evidence" value="ECO:0007669"/>
    <property type="project" value="InterPro"/>
</dbReference>
<dbReference type="CDD" id="cd01913">
    <property type="entry name" value="protease_HslV"/>
    <property type="match status" value="1"/>
</dbReference>
<dbReference type="FunFam" id="3.60.20.10:FF:000002">
    <property type="entry name" value="ATP-dependent protease subunit HslV"/>
    <property type="match status" value="1"/>
</dbReference>
<dbReference type="Gene3D" id="3.60.20.10">
    <property type="entry name" value="Glutamine Phosphoribosylpyrophosphate, subunit 1, domain 1"/>
    <property type="match status" value="1"/>
</dbReference>
<dbReference type="HAMAP" id="MF_00248">
    <property type="entry name" value="HslV"/>
    <property type="match status" value="1"/>
</dbReference>
<dbReference type="InterPro" id="IPR022281">
    <property type="entry name" value="ATP-dep_Prtase_HsIV_su"/>
</dbReference>
<dbReference type="InterPro" id="IPR029055">
    <property type="entry name" value="Ntn_hydrolases_N"/>
</dbReference>
<dbReference type="InterPro" id="IPR001353">
    <property type="entry name" value="Proteasome_sua/b"/>
</dbReference>
<dbReference type="InterPro" id="IPR023333">
    <property type="entry name" value="Proteasome_suB-type"/>
</dbReference>
<dbReference type="NCBIfam" id="TIGR03692">
    <property type="entry name" value="ATP_dep_HslV"/>
    <property type="match status" value="1"/>
</dbReference>
<dbReference type="NCBIfam" id="NF003964">
    <property type="entry name" value="PRK05456.1"/>
    <property type="match status" value="1"/>
</dbReference>
<dbReference type="PANTHER" id="PTHR32194:SF0">
    <property type="entry name" value="ATP-DEPENDENT PROTEASE SUBUNIT HSLV"/>
    <property type="match status" value="1"/>
</dbReference>
<dbReference type="PANTHER" id="PTHR32194">
    <property type="entry name" value="METALLOPROTEASE TLDD"/>
    <property type="match status" value="1"/>
</dbReference>
<dbReference type="Pfam" id="PF00227">
    <property type="entry name" value="Proteasome"/>
    <property type="match status" value="1"/>
</dbReference>
<dbReference type="PIRSF" id="PIRSF039093">
    <property type="entry name" value="HslV"/>
    <property type="match status" value="1"/>
</dbReference>
<dbReference type="SUPFAM" id="SSF56235">
    <property type="entry name" value="N-terminal nucleophile aminohydrolases (Ntn hydrolases)"/>
    <property type="match status" value="1"/>
</dbReference>
<dbReference type="PROSITE" id="PS51476">
    <property type="entry name" value="PROTEASOME_BETA_2"/>
    <property type="match status" value="1"/>
</dbReference>
<comment type="function">
    <text evidence="1">Protease subunit of a proteasome-like degradation complex believed to be a general protein degrading machinery.</text>
</comment>
<comment type="catalytic activity">
    <reaction evidence="1">
        <text>ATP-dependent cleavage of peptide bonds with broad specificity.</text>
        <dbReference type="EC" id="3.4.25.2"/>
    </reaction>
</comment>
<comment type="activity regulation">
    <text evidence="1">Allosterically activated by HslU binding.</text>
</comment>
<comment type="subunit">
    <text evidence="1">A double ring-shaped homohexamer of HslV is capped on each side by a ring-shaped HslU homohexamer. The assembly of the HslU/HslV complex is dependent on binding of ATP.</text>
</comment>
<comment type="subcellular location">
    <subcellularLocation>
        <location evidence="1">Cytoplasm</location>
    </subcellularLocation>
</comment>
<comment type="similarity">
    <text evidence="1">Belongs to the peptidase T1B family. HslV subfamily.</text>
</comment>
<name>HSLV_YERPP</name>
<sequence length="174" mass="18895">MTTIVSVRRDGHVVIGGDGQVTLGNTVMKGNAKKVRRLYNNKVIAGFAGGTADAFTLFELFERKLEMHQGHLTKAAVELAKDWRTDRMLRKLEALLAVADETASLIITGNGDVVQPEDDLIAIGSGGPYAQSAARALLENTELGARDIVEKSLSIAGDICIYTNRFQTIEELTY</sequence>
<gene>
    <name evidence="1" type="primary">hslV</name>
    <name type="ordered locus">YPDSF_3800</name>
</gene>
<keyword id="KW-0021">Allosteric enzyme</keyword>
<keyword id="KW-0963">Cytoplasm</keyword>
<keyword id="KW-0378">Hydrolase</keyword>
<keyword id="KW-0479">Metal-binding</keyword>
<keyword id="KW-0645">Protease</keyword>
<keyword id="KW-0915">Sodium</keyword>
<keyword id="KW-0346">Stress response</keyword>
<keyword id="KW-0888">Threonine protease</keyword>